<comment type="function">
    <text evidence="1">Part of the phosphoribosylformylglycinamidine synthase complex involved in the purines biosynthetic pathway. Catalyzes the ATP-dependent conversion of formylglycinamide ribonucleotide (FGAR) and glutamine to yield formylglycinamidine ribonucleotide (FGAM) and glutamate. The FGAM synthase complex is composed of three subunits. PurQ produces an ammonia molecule by converting glutamine to glutamate. PurL transfers the ammonia molecule to FGAR to form FGAM in an ATP-dependent manner. PurS interacts with PurQ and PurL and is thought to assist in the transfer of the ammonia molecule from PurQ to PurL.</text>
</comment>
<comment type="catalytic activity">
    <reaction evidence="1">
        <text>N(2)-formyl-N(1)-(5-phospho-beta-D-ribosyl)glycinamide + L-glutamine + ATP + H2O = 2-formamido-N(1)-(5-O-phospho-beta-D-ribosyl)acetamidine + L-glutamate + ADP + phosphate + H(+)</text>
        <dbReference type="Rhea" id="RHEA:17129"/>
        <dbReference type="ChEBI" id="CHEBI:15377"/>
        <dbReference type="ChEBI" id="CHEBI:15378"/>
        <dbReference type="ChEBI" id="CHEBI:29985"/>
        <dbReference type="ChEBI" id="CHEBI:30616"/>
        <dbReference type="ChEBI" id="CHEBI:43474"/>
        <dbReference type="ChEBI" id="CHEBI:58359"/>
        <dbReference type="ChEBI" id="CHEBI:147286"/>
        <dbReference type="ChEBI" id="CHEBI:147287"/>
        <dbReference type="ChEBI" id="CHEBI:456216"/>
        <dbReference type="EC" id="6.3.5.3"/>
    </reaction>
</comment>
<comment type="catalytic activity">
    <reaction evidence="1">
        <text>L-glutamine + H2O = L-glutamate + NH4(+)</text>
        <dbReference type="Rhea" id="RHEA:15889"/>
        <dbReference type="ChEBI" id="CHEBI:15377"/>
        <dbReference type="ChEBI" id="CHEBI:28938"/>
        <dbReference type="ChEBI" id="CHEBI:29985"/>
        <dbReference type="ChEBI" id="CHEBI:58359"/>
        <dbReference type="EC" id="3.5.1.2"/>
    </reaction>
</comment>
<comment type="pathway">
    <text evidence="1">Purine metabolism; IMP biosynthesis via de novo pathway; 5-amino-1-(5-phospho-D-ribosyl)imidazole from N(2)-formyl-N(1)-(5-phospho-D-ribosyl)glycinamide: step 1/2.</text>
</comment>
<comment type="subunit">
    <text evidence="1">Part of the FGAM synthase complex composed of 1 PurL, 1 PurQ and 2 PurS subunits.</text>
</comment>
<comment type="subcellular location">
    <subcellularLocation>
        <location evidence="1">Cytoplasm</location>
    </subcellularLocation>
</comment>
<dbReference type="EC" id="6.3.5.3" evidence="1"/>
<dbReference type="EC" id="3.5.1.2" evidence="1"/>
<dbReference type="EMBL" id="AE009439">
    <property type="protein sequence ID" value="AAM02004.1"/>
    <property type="molecule type" value="Genomic_DNA"/>
</dbReference>
<dbReference type="RefSeq" id="WP_011019159.1">
    <property type="nucleotide sequence ID" value="NC_003551.1"/>
</dbReference>
<dbReference type="SMR" id="Q8TX85"/>
<dbReference type="FunCoup" id="Q8TX85">
    <property type="interactions" value="19"/>
</dbReference>
<dbReference type="STRING" id="190192.MK0790"/>
<dbReference type="PaxDb" id="190192-MK0790"/>
<dbReference type="EnsemblBacteria" id="AAM02004">
    <property type="protein sequence ID" value="AAM02004"/>
    <property type="gene ID" value="MK0790"/>
</dbReference>
<dbReference type="GeneID" id="1476891"/>
<dbReference type="KEGG" id="mka:MK0790"/>
<dbReference type="PATRIC" id="fig|190192.8.peg.831"/>
<dbReference type="HOGENOM" id="CLU_001031_3_1_2"/>
<dbReference type="InParanoid" id="Q8TX85"/>
<dbReference type="OrthoDB" id="6486at2157"/>
<dbReference type="UniPathway" id="UPA00074">
    <property type="reaction ID" value="UER00128"/>
</dbReference>
<dbReference type="Proteomes" id="UP000001826">
    <property type="component" value="Chromosome"/>
</dbReference>
<dbReference type="GO" id="GO:0005737">
    <property type="term" value="C:cytoplasm"/>
    <property type="evidence" value="ECO:0007669"/>
    <property type="project" value="UniProtKB-SubCell"/>
</dbReference>
<dbReference type="GO" id="GO:0005524">
    <property type="term" value="F:ATP binding"/>
    <property type="evidence" value="ECO:0007669"/>
    <property type="project" value="UniProtKB-KW"/>
</dbReference>
<dbReference type="GO" id="GO:0004359">
    <property type="term" value="F:glutaminase activity"/>
    <property type="evidence" value="ECO:0007669"/>
    <property type="project" value="UniProtKB-EC"/>
</dbReference>
<dbReference type="GO" id="GO:0004642">
    <property type="term" value="F:phosphoribosylformylglycinamidine synthase activity"/>
    <property type="evidence" value="ECO:0007669"/>
    <property type="project" value="UniProtKB-UniRule"/>
</dbReference>
<dbReference type="GO" id="GO:0006189">
    <property type="term" value="P:'de novo' IMP biosynthetic process"/>
    <property type="evidence" value="ECO:0007669"/>
    <property type="project" value="UniProtKB-UniRule"/>
</dbReference>
<dbReference type="CDD" id="cd01740">
    <property type="entry name" value="GATase1_FGAR_AT"/>
    <property type="match status" value="1"/>
</dbReference>
<dbReference type="Gene3D" id="3.40.50.880">
    <property type="match status" value="1"/>
</dbReference>
<dbReference type="HAMAP" id="MF_00421">
    <property type="entry name" value="PurQ"/>
    <property type="match status" value="1"/>
</dbReference>
<dbReference type="InterPro" id="IPR029062">
    <property type="entry name" value="Class_I_gatase-like"/>
</dbReference>
<dbReference type="InterPro" id="IPR010075">
    <property type="entry name" value="PRibForGlyAmidine_synth_PurQ"/>
</dbReference>
<dbReference type="NCBIfam" id="TIGR01737">
    <property type="entry name" value="FGAM_synth_I"/>
    <property type="match status" value="1"/>
</dbReference>
<dbReference type="NCBIfam" id="NF002957">
    <property type="entry name" value="PRK03619.1"/>
    <property type="match status" value="1"/>
</dbReference>
<dbReference type="PANTHER" id="PTHR47552">
    <property type="entry name" value="PHOSPHORIBOSYLFORMYLGLYCINAMIDINE SYNTHASE SUBUNIT PURQ"/>
    <property type="match status" value="1"/>
</dbReference>
<dbReference type="PANTHER" id="PTHR47552:SF1">
    <property type="entry name" value="PHOSPHORIBOSYLFORMYLGLYCINAMIDINE SYNTHASE SUBUNIT PURQ"/>
    <property type="match status" value="1"/>
</dbReference>
<dbReference type="Pfam" id="PF13507">
    <property type="entry name" value="GATase_5"/>
    <property type="match status" value="1"/>
</dbReference>
<dbReference type="PIRSF" id="PIRSF001586">
    <property type="entry name" value="FGAM_synth_I"/>
    <property type="match status" value="1"/>
</dbReference>
<dbReference type="SMART" id="SM01211">
    <property type="entry name" value="GATase_5"/>
    <property type="match status" value="1"/>
</dbReference>
<dbReference type="SUPFAM" id="SSF52317">
    <property type="entry name" value="Class I glutamine amidotransferase-like"/>
    <property type="match status" value="1"/>
</dbReference>
<dbReference type="PROSITE" id="PS51273">
    <property type="entry name" value="GATASE_TYPE_1"/>
    <property type="match status" value="1"/>
</dbReference>
<name>PURQ_METKA</name>
<feature type="chain" id="PRO_0000100610" description="Phosphoribosylformylglycinamidine synthase subunit PurQ">
    <location>
        <begin position="1"/>
        <end position="226"/>
    </location>
</feature>
<feature type="domain" description="Glutamine amidotransferase type-1" evidence="1">
    <location>
        <begin position="3"/>
        <end position="226"/>
    </location>
</feature>
<feature type="active site" description="Nucleophile" evidence="1">
    <location>
        <position position="86"/>
    </location>
</feature>
<feature type="active site" evidence="1">
    <location>
        <position position="199"/>
    </location>
</feature>
<feature type="active site" evidence="1">
    <location>
        <position position="201"/>
    </location>
</feature>
<reference key="1">
    <citation type="journal article" date="2002" name="Proc. Natl. Acad. Sci. U.S.A.">
        <title>The complete genome of hyperthermophile Methanopyrus kandleri AV19 and monophyly of archaeal methanogens.</title>
        <authorList>
            <person name="Slesarev A.I."/>
            <person name="Mezhevaya K.V."/>
            <person name="Makarova K.S."/>
            <person name="Polushin N.N."/>
            <person name="Shcherbinina O.V."/>
            <person name="Shakhova V.V."/>
            <person name="Belova G.I."/>
            <person name="Aravind L."/>
            <person name="Natale D.A."/>
            <person name="Rogozin I.B."/>
            <person name="Tatusov R.L."/>
            <person name="Wolf Y.I."/>
            <person name="Stetter K.O."/>
            <person name="Malykh A.G."/>
            <person name="Koonin E.V."/>
            <person name="Kozyavkin S.A."/>
        </authorList>
    </citation>
    <scope>NUCLEOTIDE SEQUENCE [LARGE SCALE GENOMIC DNA]</scope>
    <source>
        <strain>AV19 / DSM 6324 / JCM 9639 / NBRC 100938</strain>
    </source>
</reference>
<gene>
    <name evidence="1" type="primary">purQ</name>
    <name type="ordered locus">MK0790</name>
</gene>
<protein>
    <recommendedName>
        <fullName evidence="1">Phosphoribosylformylglycinamidine synthase subunit PurQ</fullName>
        <shortName evidence="1">FGAM synthase</shortName>
        <ecNumber evidence="1">6.3.5.3</ecNumber>
    </recommendedName>
    <alternativeName>
        <fullName evidence="1">Formylglycinamide ribonucleotide amidotransferase subunit I</fullName>
        <shortName evidence="1">FGAR amidotransferase I</shortName>
        <shortName evidence="1">FGAR-AT I</shortName>
    </alternativeName>
    <alternativeName>
        <fullName evidence="1">Glutaminase PurQ</fullName>
        <ecNumber evidence="1">3.5.1.2</ecNumber>
    </alternativeName>
    <alternativeName>
        <fullName evidence="1">Phosphoribosylformylglycinamidine synthase subunit I</fullName>
    </alternativeName>
</protein>
<keyword id="KW-0067">ATP-binding</keyword>
<keyword id="KW-0963">Cytoplasm</keyword>
<keyword id="KW-0315">Glutamine amidotransferase</keyword>
<keyword id="KW-0378">Hydrolase</keyword>
<keyword id="KW-0436">Ligase</keyword>
<keyword id="KW-0547">Nucleotide-binding</keyword>
<keyword id="KW-0658">Purine biosynthesis</keyword>
<keyword id="KW-1185">Reference proteome</keyword>
<accession>Q8TX85</accession>
<proteinExistence type="inferred from homology"/>
<sequence>MVRVAVIRFPGTNCDLEMAWAVKLAGGDPEFVWHEDGGLDDFDAVIIPGGFTYGDYIRAGAIAALSPILEEIRECAEDGRPVLGVCNGMQILAEAELIPGTLTVNVGNRFICDWVYLRVERTDTPFTTKYQEDEVIRVPIAHAEGRYYYENPEEIEDNVVFRFCGPDGDVSEEYNLNGSVGGITGVVNDDGNVLGMMPHPERAAHRLLNSDDGLRLFESLVEWCRS</sequence>
<organism>
    <name type="scientific">Methanopyrus kandleri (strain AV19 / DSM 6324 / JCM 9639 / NBRC 100938)</name>
    <dbReference type="NCBI Taxonomy" id="190192"/>
    <lineage>
        <taxon>Archaea</taxon>
        <taxon>Methanobacteriati</taxon>
        <taxon>Methanobacteriota</taxon>
        <taxon>Methanomada group</taxon>
        <taxon>Methanopyri</taxon>
        <taxon>Methanopyrales</taxon>
        <taxon>Methanopyraceae</taxon>
        <taxon>Methanopyrus</taxon>
    </lineage>
</organism>
<evidence type="ECO:0000255" key="1">
    <source>
        <dbReference type="HAMAP-Rule" id="MF_00421"/>
    </source>
</evidence>